<organism>
    <name type="scientific">Paraburkholderia phymatum (strain DSM 17167 / CIP 108236 / LMG 21445 / STM815)</name>
    <name type="common">Burkholderia phymatum</name>
    <dbReference type="NCBI Taxonomy" id="391038"/>
    <lineage>
        <taxon>Bacteria</taxon>
        <taxon>Pseudomonadati</taxon>
        <taxon>Pseudomonadota</taxon>
        <taxon>Betaproteobacteria</taxon>
        <taxon>Burkholderiales</taxon>
        <taxon>Burkholderiaceae</taxon>
        <taxon>Paraburkholderia</taxon>
    </lineage>
</organism>
<comment type="function">
    <text evidence="1">One of several proteins that assist in the late maturation steps of the functional core of the 30S ribosomal subunit. Helps release RbfA from mature subunits. May play a role in the assembly of ribosomal proteins into the subunit. Circularly permuted GTPase that catalyzes slow GTP hydrolysis, GTPase activity is stimulated by the 30S ribosomal subunit.</text>
</comment>
<comment type="cofactor">
    <cofactor evidence="1">
        <name>Zn(2+)</name>
        <dbReference type="ChEBI" id="CHEBI:29105"/>
    </cofactor>
    <text evidence="1">Binds 1 zinc ion per subunit.</text>
</comment>
<comment type="subunit">
    <text evidence="1">Monomer. Associates with 30S ribosomal subunit, binds 16S rRNA.</text>
</comment>
<comment type="subcellular location">
    <subcellularLocation>
        <location evidence="1">Cytoplasm</location>
    </subcellularLocation>
</comment>
<comment type="similarity">
    <text evidence="1">Belongs to the TRAFAC class YlqF/YawG GTPase family. RsgA subfamily.</text>
</comment>
<accession>B2JF36</accession>
<feature type="chain" id="PRO_1000216034" description="Small ribosomal subunit biogenesis GTPase RsgA">
    <location>
        <begin position="1"/>
        <end position="317"/>
    </location>
</feature>
<feature type="domain" description="CP-type G" evidence="2">
    <location>
        <begin position="88"/>
        <end position="249"/>
    </location>
</feature>
<feature type="binding site" evidence="1">
    <location>
        <begin position="136"/>
        <end position="139"/>
    </location>
    <ligand>
        <name>GTP</name>
        <dbReference type="ChEBI" id="CHEBI:37565"/>
    </ligand>
</feature>
<feature type="binding site" evidence="1">
    <location>
        <begin position="190"/>
        <end position="198"/>
    </location>
    <ligand>
        <name>GTP</name>
        <dbReference type="ChEBI" id="CHEBI:37565"/>
    </ligand>
</feature>
<feature type="binding site" evidence="1">
    <location>
        <position position="273"/>
    </location>
    <ligand>
        <name>Zn(2+)</name>
        <dbReference type="ChEBI" id="CHEBI:29105"/>
    </ligand>
</feature>
<feature type="binding site" evidence="1">
    <location>
        <position position="278"/>
    </location>
    <ligand>
        <name>Zn(2+)</name>
        <dbReference type="ChEBI" id="CHEBI:29105"/>
    </ligand>
</feature>
<feature type="binding site" evidence="1">
    <location>
        <position position="280"/>
    </location>
    <ligand>
        <name>Zn(2+)</name>
        <dbReference type="ChEBI" id="CHEBI:29105"/>
    </ligand>
</feature>
<feature type="binding site" evidence="1">
    <location>
        <position position="286"/>
    </location>
    <ligand>
        <name>Zn(2+)</name>
        <dbReference type="ChEBI" id="CHEBI:29105"/>
    </ligand>
</feature>
<protein>
    <recommendedName>
        <fullName evidence="1">Small ribosomal subunit biogenesis GTPase RsgA</fullName>
        <ecNumber evidence="1">3.6.1.-</ecNumber>
    </recommendedName>
</protein>
<dbReference type="EC" id="3.6.1.-" evidence="1"/>
<dbReference type="EMBL" id="CP001043">
    <property type="protein sequence ID" value="ACC69965.1"/>
    <property type="molecule type" value="Genomic_DNA"/>
</dbReference>
<dbReference type="RefSeq" id="WP_012400185.1">
    <property type="nucleotide sequence ID" value="NC_010622.1"/>
</dbReference>
<dbReference type="SMR" id="B2JF36"/>
<dbReference type="STRING" id="391038.Bphy_0776"/>
<dbReference type="KEGG" id="bph:Bphy_0776"/>
<dbReference type="eggNOG" id="COG1162">
    <property type="taxonomic scope" value="Bacteria"/>
</dbReference>
<dbReference type="HOGENOM" id="CLU_033617_2_0_4"/>
<dbReference type="OrthoDB" id="9809485at2"/>
<dbReference type="Proteomes" id="UP000001192">
    <property type="component" value="Chromosome 1"/>
</dbReference>
<dbReference type="GO" id="GO:0005737">
    <property type="term" value="C:cytoplasm"/>
    <property type="evidence" value="ECO:0007669"/>
    <property type="project" value="UniProtKB-SubCell"/>
</dbReference>
<dbReference type="GO" id="GO:0005525">
    <property type="term" value="F:GTP binding"/>
    <property type="evidence" value="ECO:0007669"/>
    <property type="project" value="UniProtKB-UniRule"/>
</dbReference>
<dbReference type="GO" id="GO:0003924">
    <property type="term" value="F:GTPase activity"/>
    <property type="evidence" value="ECO:0007669"/>
    <property type="project" value="UniProtKB-UniRule"/>
</dbReference>
<dbReference type="GO" id="GO:0046872">
    <property type="term" value="F:metal ion binding"/>
    <property type="evidence" value="ECO:0007669"/>
    <property type="project" value="UniProtKB-KW"/>
</dbReference>
<dbReference type="GO" id="GO:0019843">
    <property type="term" value="F:rRNA binding"/>
    <property type="evidence" value="ECO:0007669"/>
    <property type="project" value="UniProtKB-KW"/>
</dbReference>
<dbReference type="GO" id="GO:0042274">
    <property type="term" value="P:ribosomal small subunit biogenesis"/>
    <property type="evidence" value="ECO:0007669"/>
    <property type="project" value="UniProtKB-UniRule"/>
</dbReference>
<dbReference type="CDD" id="cd04466">
    <property type="entry name" value="S1_YloQ_GTPase"/>
    <property type="match status" value="1"/>
</dbReference>
<dbReference type="CDD" id="cd01854">
    <property type="entry name" value="YjeQ_EngC"/>
    <property type="match status" value="1"/>
</dbReference>
<dbReference type="Gene3D" id="2.40.50.140">
    <property type="entry name" value="Nucleic acid-binding proteins"/>
    <property type="match status" value="1"/>
</dbReference>
<dbReference type="Gene3D" id="3.40.50.300">
    <property type="entry name" value="P-loop containing nucleotide triphosphate hydrolases"/>
    <property type="match status" value="1"/>
</dbReference>
<dbReference type="Gene3D" id="1.10.40.50">
    <property type="entry name" value="Probable gtpase engc, domain 3"/>
    <property type="match status" value="1"/>
</dbReference>
<dbReference type="HAMAP" id="MF_01820">
    <property type="entry name" value="GTPase_RsgA"/>
    <property type="match status" value="1"/>
</dbReference>
<dbReference type="InterPro" id="IPR030378">
    <property type="entry name" value="G_CP_dom"/>
</dbReference>
<dbReference type="InterPro" id="IPR012340">
    <property type="entry name" value="NA-bd_OB-fold"/>
</dbReference>
<dbReference type="InterPro" id="IPR027417">
    <property type="entry name" value="P-loop_NTPase"/>
</dbReference>
<dbReference type="InterPro" id="IPR004881">
    <property type="entry name" value="Ribosome_biogen_GTPase_RsgA"/>
</dbReference>
<dbReference type="InterPro" id="IPR010914">
    <property type="entry name" value="RsgA_GTPase_dom"/>
</dbReference>
<dbReference type="InterPro" id="IPR031944">
    <property type="entry name" value="RsgA_N"/>
</dbReference>
<dbReference type="NCBIfam" id="TIGR00157">
    <property type="entry name" value="ribosome small subunit-dependent GTPase A"/>
    <property type="match status" value="1"/>
</dbReference>
<dbReference type="PANTHER" id="PTHR32120">
    <property type="entry name" value="SMALL RIBOSOMAL SUBUNIT BIOGENESIS GTPASE RSGA"/>
    <property type="match status" value="1"/>
</dbReference>
<dbReference type="PANTHER" id="PTHR32120:SF11">
    <property type="entry name" value="SMALL RIBOSOMAL SUBUNIT BIOGENESIS GTPASE RSGA 1, MITOCHONDRIAL-RELATED"/>
    <property type="match status" value="1"/>
</dbReference>
<dbReference type="Pfam" id="PF03193">
    <property type="entry name" value="RsgA_GTPase"/>
    <property type="match status" value="1"/>
</dbReference>
<dbReference type="SUPFAM" id="SSF50249">
    <property type="entry name" value="Nucleic acid-binding proteins"/>
    <property type="match status" value="1"/>
</dbReference>
<dbReference type="SUPFAM" id="SSF52540">
    <property type="entry name" value="P-loop containing nucleoside triphosphate hydrolases"/>
    <property type="match status" value="1"/>
</dbReference>
<dbReference type="PROSITE" id="PS50936">
    <property type="entry name" value="ENGC_GTPASE"/>
    <property type="match status" value="1"/>
</dbReference>
<dbReference type="PROSITE" id="PS51721">
    <property type="entry name" value="G_CP"/>
    <property type="match status" value="1"/>
</dbReference>
<sequence length="317" mass="34798">MSGRSPKALRAATANDRAQDRVRGLVIAAHGRHYIVAPEDGSAILQCFPRGKRSEIAVGDQVLYEPTSADQGVIVEIGERRNLLYRSDQYKSKLFAANLDQLLIVLATEPHFSEDLLGRALVAAEENELKPLIVLNKIDVEAALPLARKRLQLYRGLGYTVLEVSIKGQPDAARATLEAHLNGHSTLLLGQSGMGKSTLVNLLIPDAEVATREISTALNSGRHTTTFTRLYPLPGSEGALIDSPGFQEFGLHHLTEGKLERAFPEFRPLLAECRFYNCHHLHEPGCAILEAVADGRIAKERHALYAQLVHEASQIVR</sequence>
<reference key="1">
    <citation type="journal article" date="2014" name="Stand. Genomic Sci.">
        <title>Complete genome sequence of Burkholderia phymatum STM815(T), a broad host range and efficient nitrogen-fixing symbiont of Mimosa species.</title>
        <authorList>
            <person name="Moulin L."/>
            <person name="Klonowska A."/>
            <person name="Caroline B."/>
            <person name="Booth K."/>
            <person name="Vriezen J.A."/>
            <person name="Melkonian R."/>
            <person name="James E.K."/>
            <person name="Young J.P."/>
            <person name="Bena G."/>
            <person name="Hauser L."/>
            <person name="Land M."/>
            <person name="Kyrpides N."/>
            <person name="Bruce D."/>
            <person name="Chain P."/>
            <person name="Copeland A."/>
            <person name="Pitluck S."/>
            <person name="Woyke T."/>
            <person name="Lizotte-Waniewski M."/>
            <person name="Bristow J."/>
            <person name="Riley M."/>
        </authorList>
    </citation>
    <scope>NUCLEOTIDE SEQUENCE [LARGE SCALE GENOMIC DNA]</scope>
    <source>
        <strain>DSM 17167 / CIP 108236 / LMG 21445 / STM815</strain>
    </source>
</reference>
<name>RSGA_PARP8</name>
<evidence type="ECO:0000255" key="1">
    <source>
        <dbReference type="HAMAP-Rule" id="MF_01820"/>
    </source>
</evidence>
<evidence type="ECO:0000255" key="2">
    <source>
        <dbReference type="PROSITE-ProRule" id="PRU01058"/>
    </source>
</evidence>
<proteinExistence type="inferred from homology"/>
<keyword id="KW-0963">Cytoplasm</keyword>
<keyword id="KW-0342">GTP-binding</keyword>
<keyword id="KW-0378">Hydrolase</keyword>
<keyword id="KW-0479">Metal-binding</keyword>
<keyword id="KW-0547">Nucleotide-binding</keyword>
<keyword id="KW-1185">Reference proteome</keyword>
<keyword id="KW-0690">Ribosome biogenesis</keyword>
<keyword id="KW-0694">RNA-binding</keyword>
<keyword id="KW-0699">rRNA-binding</keyword>
<keyword id="KW-0862">Zinc</keyword>
<gene>
    <name evidence="1" type="primary">rsgA</name>
    <name type="ordered locus">Bphy_0776</name>
</gene>